<dbReference type="EMBL" id="CP001110">
    <property type="protein sequence ID" value="ACF42635.1"/>
    <property type="molecule type" value="Genomic_DNA"/>
</dbReference>
<dbReference type="RefSeq" id="WP_012507131.1">
    <property type="nucleotide sequence ID" value="NC_011060.1"/>
</dbReference>
<dbReference type="SMR" id="B4SBW0"/>
<dbReference type="STRING" id="324925.Ppha_0302"/>
<dbReference type="KEGG" id="pph:Ppha_0302"/>
<dbReference type="eggNOG" id="COG0199">
    <property type="taxonomic scope" value="Bacteria"/>
</dbReference>
<dbReference type="HOGENOM" id="CLU_139869_0_0_10"/>
<dbReference type="OrthoDB" id="9810484at2"/>
<dbReference type="Proteomes" id="UP000002724">
    <property type="component" value="Chromosome"/>
</dbReference>
<dbReference type="GO" id="GO:0005737">
    <property type="term" value="C:cytoplasm"/>
    <property type="evidence" value="ECO:0007669"/>
    <property type="project" value="UniProtKB-ARBA"/>
</dbReference>
<dbReference type="GO" id="GO:0015935">
    <property type="term" value="C:small ribosomal subunit"/>
    <property type="evidence" value="ECO:0007669"/>
    <property type="project" value="TreeGrafter"/>
</dbReference>
<dbReference type="GO" id="GO:0019843">
    <property type="term" value="F:rRNA binding"/>
    <property type="evidence" value="ECO:0007669"/>
    <property type="project" value="UniProtKB-UniRule"/>
</dbReference>
<dbReference type="GO" id="GO:0003735">
    <property type="term" value="F:structural constituent of ribosome"/>
    <property type="evidence" value="ECO:0007669"/>
    <property type="project" value="InterPro"/>
</dbReference>
<dbReference type="GO" id="GO:0006412">
    <property type="term" value="P:translation"/>
    <property type="evidence" value="ECO:0007669"/>
    <property type="project" value="UniProtKB-UniRule"/>
</dbReference>
<dbReference type="Gene3D" id="4.10.830.10">
    <property type="entry name" value="30s Ribosomal Protein S14, Chain N"/>
    <property type="match status" value="1"/>
</dbReference>
<dbReference type="HAMAP" id="MF_00537">
    <property type="entry name" value="Ribosomal_uS14_1"/>
    <property type="match status" value="1"/>
</dbReference>
<dbReference type="InterPro" id="IPR001209">
    <property type="entry name" value="Ribosomal_uS14"/>
</dbReference>
<dbReference type="InterPro" id="IPR023036">
    <property type="entry name" value="Ribosomal_uS14_bac/plastid"/>
</dbReference>
<dbReference type="InterPro" id="IPR043140">
    <property type="entry name" value="Ribosomal_uS14_sf"/>
</dbReference>
<dbReference type="NCBIfam" id="NF006477">
    <property type="entry name" value="PRK08881.1"/>
    <property type="match status" value="1"/>
</dbReference>
<dbReference type="PANTHER" id="PTHR19836">
    <property type="entry name" value="30S RIBOSOMAL PROTEIN S14"/>
    <property type="match status" value="1"/>
</dbReference>
<dbReference type="PANTHER" id="PTHR19836:SF19">
    <property type="entry name" value="SMALL RIBOSOMAL SUBUNIT PROTEIN US14M"/>
    <property type="match status" value="1"/>
</dbReference>
<dbReference type="Pfam" id="PF00253">
    <property type="entry name" value="Ribosomal_S14"/>
    <property type="match status" value="1"/>
</dbReference>
<dbReference type="SUPFAM" id="SSF57716">
    <property type="entry name" value="Glucocorticoid receptor-like (DNA-binding domain)"/>
    <property type="match status" value="1"/>
</dbReference>
<protein>
    <recommendedName>
        <fullName evidence="1">Small ribosomal subunit protein uS14</fullName>
    </recommendedName>
    <alternativeName>
        <fullName evidence="2">30S ribosomal protein S14</fullName>
    </alternativeName>
</protein>
<keyword id="KW-1185">Reference proteome</keyword>
<keyword id="KW-0687">Ribonucleoprotein</keyword>
<keyword id="KW-0689">Ribosomal protein</keyword>
<keyword id="KW-0694">RNA-binding</keyword>
<keyword id="KW-0699">rRNA-binding</keyword>
<sequence>MAKKSVIARNEKRIKLVAKYAVLRAELLKAGDYEALRKLPRDSSATRVRNRCVLTGRGRGVYAKYGLCRHMFRKFALEGKLPGVKKASW</sequence>
<reference key="1">
    <citation type="submission" date="2008-06" db="EMBL/GenBank/DDBJ databases">
        <title>Complete sequence of Pelodictyon phaeoclathratiforme BU-1.</title>
        <authorList>
            <consortium name="US DOE Joint Genome Institute"/>
            <person name="Lucas S."/>
            <person name="Copeland A."/>
            <person name="Lapidus A."/>
            <person name="Glavina del Rio T."/>
            <person name="Dalin E."/>
            <person name="Tice H."/>
            <person name="Bruce D."/>
            <person name="Goodwin L."/>
            <person name="Pitluck S."/>
            <person name="Schmutz J."/>
            <person name="Larimer F."/>
            <person name="Land M."/>
            <person name="Hauser L."/>
            <person name="Kyrpides N."/>
            <person name="Mikhailova N."/>
            <person name="Liu Z."/>
            <person name="Li T."/>
            <person name="Zhao F."/>
            <person name="Overmann J."/>
            <person name="Bryant D.A."/>
            <person name="Richardson P."/>
        </authorList>
    </citation>
    <scope>NUCLEOTIDE SEQUENCE [LARGE SCALE GENOMIC DNA]</scope>
    <source>
        <strain>DSM 5477 / BU-1</strain>
    </source>
</reference>
<accession>B4SBW0</accession>
<evidence type="ECO:0000255" key="1">
    <source>
        <dbReference type="HAMAP-Rule" id="MF_00537"/>
    </source>
</evidence>
<evidence type="ECO:0000305" key="2"/>
<feature type="chain" id="PRO_1000128483" description="Small ribosomal subunit protein uS14">
    <location>
        <begin position="1"/>
        <end position="89"/>
    </location>
</feature>
<gene>
    <name evidence="1" type="primary">rpsN</name>
    <name type="ordered locus">Ppha_0302</name>
</gene>
<proteinExistence type="inferred from homology"/>
<comment type="function">
    <text evidence="1">Binds 16S rRNA, required for the assembly of 30S particles and may also be responsible for determining the conformation of the 16S rRNA at the A site.</text>
</comment>
<comment type="subunit">
    <text evidence="1">Part of the 30S ribosomal subunit. Contacts proteins S3 and S10.</text>
</comment>
<comment type="similarity">
    <text evidence="1">Belongs to the universal ribosomal protein uS14 family.</text>
</comment>
<organism>
    <name type="scientific">Pelodictyon phaeoclathratiforme (strain DSM 5477 / BU-1)</name>
    <dbReference type="NCBI Taxonomy" id="324925"/>
    <lineage>
        <taxon>Bacteria</taxon>
        <taxon>Pseudomonadati</taxon>
        <taxon>Chlorobiota</taxon>
        <taxon>Chlorobiia</taxon>
        <taxon>Chlorobiales</taxon>
        <taxon>Chlorobiaceae</taxon>
        <taxon>Chlorobium/Pelodictyon group</taxon>
        <taxon>Pelodictyon</taxon>
    </lineage>
</organism>
<name>RS14_PELPB</name>